<name>PROA_CALBD</name>
<sequence length="419" mass="46031">MNDLIEKAKKVKEASKKLMNLSENEKNRALSCISQKILEKMDFILQENQKDMENAVSKGIKGALLDRLKLTEDRIKQICKGIEDVIKLPDPVGEVISMWKRPNGLVIGQKRVPIGAIGIIYEARPNVTVDAAVLCLKAGNSVLLRGGSEAINSNVALVKVMKEGLLEAGIEEGSIEIVEDTSRETAIAMMKLNEYLDLLIPRGGANLIKTVVQNATVPVIETGVGNCHVFVDESADFEMAKAIVINAKTQRPGVCNAAEKLLVHKNIAESFLPMIVKELMAKGVEIRGCSKTVEICKKNGIEVKEATEDDWYTEYLDLIIGVKVVDSIDAAIEHINKYGSKHSEAIVTRDYFNAQKFLDYVDAAAVYVNASTRFTDGFEFGFGAEIGISTQKLHARGPMGLKELTTIKYIIYGSGQVRE</sequence>
<dbReference type="EC" id="1.2.1.41" evidence="1"/>
<dbReference type="EMBL" id="CP001393">
    <property type="protein sequence ID" value="ACM60738.1"/>
    <property type="molecule type" value="Genomic_DNA"/>
</dbReference>
<dbReference type="RefSeq" id="WP_015908071.1">
    <property type="nucleotide sequence ID" value="NC_012034.1"/>
</dbReference>
<dbReference type="SMR" id="B9MK80"/>
<dbReference type="STRING" id="521460.Athe_1644"/>
<dbReference type="GeneID" id="31772993"/>
<dbReference type="KEGG" id="ate:Athe_1644"/>
<dbReference type="eggNOG" id="COG0014">
    <property type="taxonomic scope" value="Bacteria"/>
</dbReference>
<dbReference type="HOGENOM" id="CLU_030231_0_0_9"/>
<dbReference type="UniPathway" id="UPA00098">
    <property type="reaction ID" value="UER00360"/>
</dbReference>
<dbReference type="Proteomes" id="UP000007723">
    <property type="component" value="Chromosome"/>
</dbReference>
<dbReference type="GO" id="GO:0005737">
    <property type="term" value="C:cytoplasm"/>
    <property type="evidence" value="ECO:0007669"/>
    <property type="project" value="UniProtKB-SubCell"/>
</dbReference>
<dbReference type="GO" id="GO:0004350">
    <property type="term" value="F:glutamate-5-semialdehyde dehydrogenase activity"/>
    <property type="evidence" value="ECO:0007669"/>
    <property type="project" value="UniProtKB-UniRule"/>
</dbReference>
<dbReference type="GO" id="GO:0050661">
    <property type="term" value="F:NADP binding"/>
    <property type="evidence" value="ECO:0007669"/>
    <property type="project" value="InterPro"/>
</dbReference>
<dbReference type="GO" id="GO:0055129">
    <property type="term" value="P:L-proline biosynthetic process"/>
    <property type="evidence" value="ECO:0007669"/>
    <property type="project" value="UniProtKB-UniRule"/>
</dbReference>
<dbReference type="CDD" id="cd07079">
    <property type="entry name" value="ALDH_F18-19_ProA-GPR"/>
    <property type="match status" value="1"/>
</dbReference>
<dbReference type="FunFam" id="3.40.309.10:FF:000006">
    <property type="entry name" value="Gamma-glutamyl phosphate reductase"/>
    <property type="match status" value="1"/>
</dbReference>
<dbReference type="Gene3D" id="3.40.605.10">
    <property type="entry name" value="Aldehyde Dehydrogenase, Chain A, domain 1"/>
    <property type="match status" value="1"/>
</dbReference>
<dbReference type="Gene3D" id="3.40.309.10">
    <property type="entry name" value="Aldehyde Dehydrogenase, Chain A, domain 2"/>
    <property type="match status" value="1"/>
</dbReference>
<dbReference type="HAMAP" id="MF_00412">
    <property type="entry name" value="ProA"/>
    <property type="match status" value="1"/>
</dbReference>
<dbReference type="InterPro" id="IPR016161">
    <property type="entry name" value="Ald_DH/histidinol_DH"/>
</dbReference>
<dbReference type="InterPro" id="IPR016163">
    <property type="entry name" value="Ald_DH_C"/>
</dbReference>
<dbReference type="InterPro" id="IPR016162">
    <property type="entry name" value="Ald_DH_N"/>
</dbReference>
<dbReference type="InterPro" id="IPR015590">
    <property type="entry name" value="Aldehyde_DH_dom"/>
</dbReference>
<dbReference type="InterPro" id="IPR020593">
    <property type="entry name" value="G-glutamylP_reductase_CS"/>
</dbReference>
<dbReference type="InterPro" id="IPR012134">
    <property type="entry name" value="Glu-5-SA_DH"/>
</dbReference>
<dbReference type="InterPro" id="IPR000965">
    <property type="entry name" value="GPR_dom"/>
</dbReference>
<dbReference type="NCBIfam" id="NF001221">
    <property type="entry name" value="PRK00197.1"/>
    <property type="match status" value="1"/>
</dbReference>
<dbReference type="NCBIfam" id="TIGR00407">
    <property type="entry name" value="proA"/>
    <property type="match status" value="1"/>
</dbReference>
<dbReference type="PANTHER" id="PTHR11063:SF8">
    <property type="entry name" value="DELTA-1-PYRROLINE-5-CARBOXYLATE SYNTHASE"/>
    <property type="match status" value="1"/>
</dbReference>
<dbReference type="PANTHER" id="PTHR11063">
    <property type="entry name" value="GLUTAMATE SEMIALDEHYDE DEHYDROGENASE"/>
    <property type="match status" value="1"/>
</dbReference>
<dbReference type="Pfam" id="PF00171">
    <property type="entry name" value="Aldedh"/>
    <property type="match status" value="1"/>
</dbReference>
<dbReference type="PIRSF" id="PIRSF000151">
    <property type="entry name" value="GPR"/>
    <property type="match status" value="1"/>
</dbReference>
<dbReference type="SUPFAM" id="SSF53720">
    <property type="entry name" value="ALDH-like"/>
    <property type="match status" value="1"/>
</dbReference>
<dbReference type="PROSITE" id="PS01223">
    <property type="entry name" value="PROA"/>
    <property type="match status" value="1"/>
</dbReference>
<proteinExistence type="inferred from homology"/>
<comment type="function">
    <text evidence="1">Catalyzes the NADPH-dependent reduction of L-glutamate 5-phosphate into L-glutamate 5-semialdehyde and phosphate. The product spontaneously undergoes cyclization to form 1-pyrroline-5-carboxylate.</text>
</comment>
<comment type="catalytic activity">
    <reaction evidence="1">
        <text>L-glutamate 5-semialdehyde + phosphate + NADP(+) = L-glutamyl 5-phosphate + NADPH + H(+)</text>
        <dbReference type="Rhea" id="RHEA:19541"/>
        <dbReference type="ChEBI" id="CHEBI:15378"/>
        <dbReference type="ChEBI" id="CHEBI:43474"/>
        <dbReference type="ChEBI" id="CHEBI:57783"/>
        <dbReference type="ChEBI" id="CHEBI:58066"/>
        <dbReference type="ChEBI" id="CHEBI:58274"/>
        <dbReference type="ChEBI" id="CHEBI:58349"/>
        <dbReference type="EC" id="1.2.1.41"/>
    </reaction>
</comment>
<comment type="pathway">
    <text evidence="1">Amino-acid biosynthesis; L-proline biosynthesis; L-glutamate 5-semialdehyde from L-glutamate: step 2/2.</text>
</comment>
<comment type="subcellular location">
    <subcellularLocation>
        <location evidence="1">Cytoplasm</location>
    </subcellularLocation>
</comment>
<comment type="similarity">
    <text evidence="1">Belongs to the gamma-glutamyl phosphate reductase family.</text>
</comment>
<feature type="chain" id="PRO_1000193563" description="Gamma-glutamyl phosphate reductase">
    <location>
        <begin position="1"/>
        <end position="419"/>
    </location>
</feature>
<gene>
    <name evidence="1" type="primary">proA</name>
    <name type="ordered locus">Athe_1644</name>
</gene>
<evidence type="ECO:0000255" key="1">
    <source>
        <dbReference type="HAMAP-Rule" id="MF_00412"/>
    </source>
</evidence>
<organism>
    <name type="scientific">Caldicellulosiruptor bescii (strain ATCC BAA-1888 / DSM 6725 / KCTC 15123 / Z-1320)</name>
    <name type="common">Anaerocellum thermophilum</name>
    <dbReference type="NCBI Taxonomy" id="521460"/>
    <lineage>
        <taxon>Bacteria</taxon>
        <taxon>Bacillati</taxon>
        <taxon>Bacillota</taxon>
        <taxon>Bacillota incertae sedis</taxon>
        <taxon>Caldicellulosiruptorales</taxon>
        <taxon>Caldicellulosiruptoraceae</taxon>
        <taxon>Caldicellulosiruptor</taxon>
    </lineage>
</organism>
<keyword id="KW-0028">Amino-acid biosynthesis</keyword>
<keyword id="KW-0963">Cytoplasm</keyword>
<keyword id="KW-0521">NADP</keyword>
<keyword id="KW-0560">Oxidoreductase</keyword>
<keyword id="KW-0641">Proline biosynthesis</keyword>
<protein>
    <recommendedName>
        <fullName evidence="1">Gamma-glutamyl phosphate reductase</fullName>
        <shortName evidence="1">GPR</shortName>
        <ecNumber evidence="1">1.2.1.41</ecNumber>
    </recommendedName>
    <alternativeName>
        <fullName evidence="1">Glutamate-5-semialdehyde dehydrogenase</fullName>
    </alternativeName>
    <alternativeName>
        <fullName evidence="1">Glutamyl-gamma-semialdehyde dehydrogenase</fullName>
        <shortName evidence="1">GSA dehydrogenase</shortName>
    </alternativeName>
</protein>
<accession>B9MK80</accession>
<reference key="1">
    <citation type="submission" date="2009-01" db="EMBL/GenBank/DDBJ databases">
        <title>Complete sequence of chromosome of Caldicellulosiruptor becscii DSM 6725.</title>
        <authorList>
            <person name="Lucas S."/>
            <person name="Copeland A."/>
            <person name="Lapidus A."/>
            <person name="Glavina del Rio T."/>
            <person name="Tice H."/>
            <person name="Bruce D."/>
            <person name="Goodwin L."/>
            <person name="Pitluck S."/>
            <person name="Sims D."/>
            <person name="Meincke L."/>
            <person name="Brettin T."/>
            <person name="Detter J.C."/>
            <person name="Han C."/>
            <person name="Larimer F."/>
            <person name="Land M."/>
            <person name="Hauser L."/>
            <person name="Kyrpides N."/>
            <person name="Ovchinnikova G."/>
            <person name="Kataeva I."/>
            <person name="Adams M.W.W."/>
        </authorList>
    </citation>
    <scope>NUCLEOTIDE SEQUENCE [LARGE SCALE GENOMIC DNA]</scope>
    <source>
        <strain>ATCC BAA-1888 / DSM 6725 / KCTC 15123 / Z-1320</strain>
    </source>
</reference>